<proteinExistence type="inferred from homology"/>
<dbReference type="EMBL" id="CP000614">
    <property type="protein sequence ID" value="ABO54449.1"/>
    <property type="molecule type" value="Genomic_DNA"/>
</dbReference>
<dbReference type="SMR" id="A4JDU6"/>
<dbReference type="KEGG" id="bvi:Bcep1808_1441"/>
<dbReference type="eggNOG" id="COG0291">
    <property type="taxonomic scope" value="Bacteria"/>
</dbReference>
<dbReference type="HOGENOM" id="CLU_169643_1_0_4"/>
<dbReference type="Proteomes" id="UP000002287">
    <property type="component" value="Chromosome 1"/>
</dbReference>
<dbReference type="GO" id="GO:0022625">
    <property type="term" value="C:cytosolic large ribosomal subunit"/>
    <property type="evidence" value="ECO:0007669"/>
    <property type="project" value="TreeGrafter"/>
</dbReference>
<dbReference type="GO" id="GO:0003735">
    <property type="term" value="F:structural constituent of ribosome"/>
    <property type="evidence" value="ECO:0007669"/>
    <property type="project" value="InterPro"/>
</dbReference>
<dbReference type="GO" id="GO:0006412">
    <property type="term" value="P:translation"/>
    <property type="evidence" value="ECO:0007669"/>
    <property type="project" value="UniProtKB-UniRule"/>
</dbReference>
<dbReference type="FunFam" id="4.10.410.60:FF:000001">
    <property type="entry name" value="50S ribosomal protein L35"/>
    <property type="match status" value="1"/>
</dbReference>
<dbReference type="Gene3D" id="4.10.410.60">
    <property type="match status" value="1"/>
</dbReference>
<dbReference type="HAMAP" id="MF_00514">
    <property type="entry name" value="Ribosomal_bL35"/>
    <property type="match status" value="1"/>
</dbReference>
<dbReference type="InterPro" id="IPR001706">
    <property type="entry name" value="Ribosomal_bL35"/>
</dbReference>
<dbReference type="InterPro" id="IPR021137">
    <property type="entry name" value="Ribosomal_bL35-like"/>
</dbReference>
<dbReference type="InterPro" id="IPR018265">
    <property type="entry name" value="Ribosomal_bL35_CS"/>
</dbReference>
<dbReference type="InterPro" id="IPR037229">
    <property type="entry name" value="Ribosomal_bL35_sf"/>
</dbReference>
<dbReference type="NCBIfam" id="TIGR00001">
    <property type="entry name" value="rpmI_bact"/>
    <property type="match status" value="1"/>
</dbReference>
<dbReference type="PANTHER" id="PTHR33343">
    <property type="entry name" value="54S RIBOSOMAL PROTEIN BL35M"/>
    <property type="match status" value="1"/>
</dbReference>
<dbReference type="PANTHER" id="PTHR33343:SF1">
    <property type="entry name" value="LARGE RIBOSOMAL SUBUNIT PROTEIN BL35M"/>
    <property type="match status" value="1"/>
</dbReference>
<dbReference type="Pfam" id="PF01632">
    <property type="entry name" value="Ribosomal_L35p"/>
    <property type="match status" value="1"/>
</dbReference>
<dbReference type="PRINTS" id="PR00064">
    <property type="entry name" value="RIBOSOMALL35"/>
</dbReference>
<dbReference type="SUPFAM" id="SSF143034">
    <property type="entry name" value="L35p-like"/>
    <property type="match status" value="1"/>
</dbReference>
<dbReference type="PROSITE" id="PS00936">
    <property type="entry name" value="RIBOSOMAL_L35"/>
    <property type="match status" value="1"/>
</dbReference>
<reference key="1">
    <citation type="submission" date="2007-03" db="EMBL/GenBank/DDBJ databases">
        <title>Complete sequence of chromosome 1 of Burkholderia vietnamiensis G4.</title>
        <authorList>
            <consortium name="US DOE Joint Genome Institute"/>
            <person name="Copeland A."/>
            <person name="Lucas S."/>
            <person name="Lapidus A."/>
            <person name="Barry K."/>
            <person name="Detter J.C."/>
            <person name="Glavina del Rio T."/>
            <person name="Hammon N."/>
            <person name="Israni S."/>
            <person name="Dalin E."/>
            <person name="Tice H."/>
            <person name="Pitluck S."/>
            <person name="Chain P."/>
            <person name="Malfatti S."/>
            <person name="Shin M."/>
            <person name="Vergez L."/>
            <person name="Schmutz J."/>
            <person name="Larimer F."/>
            <person name="Land M."/>
            <person name="Hauser L."/>
            <person name="Kyrpides N."/>
            <person name="Tiedje J."/>
            <person name="Richardson P."/>
        </authorList>
    </citation>
    <scope>NUCLEOTIDE SEQUENCE [LARGE SCALE GENOMIC DNA]</scope>
    <source>
        <strain>G4 / LMG 22486</strain>
    </source>
</reference>
<evidence type="ECO:0000255" key="1">
    <source>
        <dbReference type="HAMAP-Rule" id="MF_00514"/>
    </source>
</evidence>
<evidence type="ECO:0000305" key="2"/>
<protein>
    <recommendedName>
        <fullName evidence="1">Large ribosomal subunit protein bL35</fullName>
    </recommendedName>
    <alternativeName>
        <fullName evidence="2">50S ribosomal protein L35</fullName>
    </alternativeName>
</protein>
<keyword id="KW-0687">Ribonucleoprotein</keyword>
<keyword id="KW-0689">Ribosomal protein</keyword>
<sequence length="65" mass="7301">MPKMKTKKSAAKRFVVRPGGTVKRGQAFKRHILTKKTTKNKRHLRGATAVHDSDLNSVRAMLPFA</sequence>
<gene>
    <name evidence="1" type="primary">rpmI</name>
    <name type="ordered locus">Bcep1808_1441</name>
</gene>
<organism>
    <name type="scientific">Burkholderia vietnamiensis (strain G4 / LMG 22486)</name>
    <name type="common">Burkholderia cepacia (strain R1808)</name>
    <dbReference type="NCBI Taxonomy" id="269482"/>
    <lineage>
        <taxon>Bacteria</taxon>
        <taxon>Pseudomonadati</taxon>
        <taxon>Pseudomonadota</taxon>
        <taxon>Betaproteobacteria</taxon>
        <taxon>Burkholderiales</taxon>
        <taxon>Burkholderiaceae</taxon>
        <taxon>Burkholderia</taxon>
        <taxon>Burkholderia cepacia complex</taxon>
    </lineage>
</organism>
<feature type="chain" id="PRO_1000050670" description="Large ribosomal subunit protein bL35">
    <location>
        <begin position="1"/>
        <end position="65"/>
    </location>
</feature>
<comment type="similarity">
    <text evidence="1">Belongs to the bacterial ribosomal protein bL35 family.</text>
</comment>
<name>RL35_BURVG</name>
<accession>A4JDU6</accession>